<dbReference type="EC" id="3.1.2.22" evidence="5"/>
<dbReference type="EMBL" id="BC083686">
    <property type="protein sequence ID" value="AAH83686.1"/>
    <property type="molecule type" value="mRNA"/>
</dbReference>
<dbReference type="RefSeq" id="NP_001006984.1">
    <property type="nucleotide sequence ID" value="NM_001006983.1"/>
</dbReference>
<dbReference type="RefSeq" id="XP_008763312.1">
    <property type="nucleotide sequence ID" value="XM_008765090.4"/>
</dbReference>
<dbReference type="RefSeq" id="XP_063119243.1">
    <property type="nucleotide sequence ID" value="XM_063263173.1"/>
</dbReference>
<dbReference type="SMR" id="Q5XIJ5"/>
<dbReference type="BioGRID" id="256279">
    <property type="interactions" value="1"/>
</dbReference>
<dbReference type="FunCoup" id="Q5XIJ5">
    <property type="interactions" value="998"/>
</dbReference>
<dbReference type="STRING" id="10116.ENSRNOP00000024576"/>
<dbReference type="ESTHER" id="ratno-q5xij5">
    <property type="family name" value="ABHD17-depalmitoylase"/>
</dbReference>
<dbReference type="GlyGen" id="Q5XIJ5">
    <property type="glycosylation" value="1 site"/>
</dbReference>
<dbReference type="PhosphoSitePlus" id="Q5XIJ5"/>
<dbReference type="PaxDb" id="10116-ENSRNOP00000024576"/>
<dbReference type="Ensembl" id="ENSRNOT00000024576.4">
    <property type="protein sequence ID" value="ENSRNOP00000024576.3"/>
    <property type="gene ID" value="ENSRNOG00000018212.6"/>
</dbReference>
<dbReference type="GeneID" id="299617"/>
<dbReference type="KEGG" id="rno:299617"/>
<dbReference type="UCSC" id="RGD:1359682">
    <property type="organism name" value="rat"/>
</dbReference>
<dbReference type="AGR" id="RGD:1359682"/>
<dbReference type="CTD" id="81926"/>
<dbReference type="RGD" id="1359682">
    <property type="gene designation" value="Abhd17a"/>
</dbReference>
<dbReference type="eggNOG" id="KOG1552">
    <property type="taxonomic scope" value="Eukaryota"/>
</dbReference>
<dbReference type="GeneTree" id="ENSGT00940000155854"/>
<dbReference type="HOGENOM" id="CLU_029375_5_4_1"/>
<dbReference type="InParanoid" id="Q5XIJ5"/>
<dbReference type="OMA" id="YIRCVPG"/>
<dbReference type="OrthoDB" id="446723at2759"/>
<dbReference type="PhylomeDB" id="Q5XIJ5"/>
<dbReference type="TreeFam" id="TF314365"/>
<dbReference type="Reactome" id="R-RNO-9648002">
    <property type="pathway name" value="RAS processing"/>
</dbReference>
<dbReference type="PRO" id="PR:Q5XIJ5"/>
<dbReference type="Proteomes" id="UP000002494">
    <property type="component" value="Chromosome 7"/>
</dbReference>
<dbReference type="Bgee" id="ENSRNOG00000018212">
    <property type="expression patterns" value="Expressed in frontal cortex and 19 other cell types or tissues"/>
</dbReference>
<dbReference type="GO" id="GO:0043197">
    <property type="term" value="C:dendritic spine"/>
    <property type="evidence" value="ECO:0007669"/>
    <property type="project" value="UniProtKB-SubCell"/>
</dbReference>
<dbReference type="GO" id="GO:0010008">
    <property type="term" value="C:endosome membrane"/>
    <property type="evidence" value="ECO:0000266"/>
    <property type="project" value="RGD"/>
</dbReference>
<dbReference type="GO" id="GO:0098978">
    <property type="term" value="C:glutamatergic synapse"/>
    <property type="evidence" value="ECO:0000314"/>
    <property type="project" value="SynGO"/>
</dbReference>
<dbReference type="GO" id="GO:0016607">
    <property type="term" value="C:nuclear speck"/>
    <property type="evidence" value="ECO:0007669"/>
    <property type="project" value="Ensembl"/>
</dbReference>
<dbReference type="GO" id="GO:0005886">
    <property type="term" value="C:plasma membrane"/>
    <property type="evidence" value="ECO:0000314"/>
    <property type="project" value="UniProtKB"/>
</dbReference>
<dbReference type="GO" id="GO:0014069">
    <property type="term" value="C:postsynaptic density"/>
    <property type="evidence" value="ECO:0000314"/>
    <property type="project" value="UniProtKB"/>
</dbReference>
<dbReference type="GO" id="GO:0098839">
    <property type="term" value="C:postsynaptic density membrane"/>
    <property type="evidence" value="ECO:0000314"/>
    <property type="project" value="SynGO"/>
</dbReference>
<dbReference type="GO" id="GO:0098944">
    <property type="term" value="C:postsynaptic recycling endosome membrane"/>
    <property type="evidence" value="ECO:0000314"/>
    <property type="project" value="SynGO"/>
</dbReference>
<dbReference type="GO" id="GO:0055038">
    <property type="term" value="C:recycling endosome membrane"/>
    <property type="evidence" value="ECO:0000314"/>
    <property type="project" value="UniProtKB"/>
</dbReference>
<dbReference type="GO" id="GO:0008474">
    <property type="term" value="F:palmitoyl-(protein) hydrolase activity"/>
    <property type="evidence" value="ECO:0000314"/>
    <property type="project" value="UniProtKB"/>
</dbReference>
<dbReference type="GO" id="GO:1900226">
    <property type="term" value="P:negative regulation of NLRP3 inflammasome complex assembly"/>
    <property type="evidence" value="ECO:0000266"/>
    <property type="project" value="RGD"/>
</dbReference>
<dbReference type="GO" id="GO:1902817">
    <property type="term" value="P:negative regulation of protein localization to microtubule"/>
    <property type="evidence" value="ECO:0000315"/>
    <property type="project" value="UniProtKB"/>
</dbReference>
<dbReference type="GO" id="GO:1905668">
    <property type="term" value="P:positive regulation of protein localization to endosome"/>
    <property type="evidence" value="ECO:0000315"/>
    <property type="project" value="UniProtKB"/>
</dbReference>
<dbReference type="GO" id="GO:0002084">
    <property type="term" value="P:protein depalmitoylation"/>
    <property type="evidence" value="ECO:0000314"/>
    <property type="project" value="UniProtKB"/>
</dbReference>
<dbReference type="GO" id="GO:0072657">
    <property type="term" value="P:protein localization to membrane"/>
    <property type="evidence" value="ECO:0000266"/>
    <property type="project" value="RGD"/>
</dbReference>
<dbReference type="GO" id="GO:0099175">
    <property type="term" value="P:regulation of postsynapse organization"/>
    <property type="evidence" value="ECO:0000314"/>
    <property type="project" value="SynGO"/>
</dbReference>
<dbReference type="FunFam" id="3.40.50.1820:FF:000008">
    <property type="entry name" value="Alpha/beta hydrolase domain-containing protein 17B"/>
    <property type="match status" value="1"/>
</dbReference>
<dbReference type="Gene3D" id="3.40.50.1820">
    <property type="entry name" value="alpha/beta hydrolase"/>
    <property type="match status" value="1"/>
</dbReference>
<dbReference type="InterPro" id="IPR029058">
    <property type="entry name" value="AB_hydrolase_fold"/>
</dbReference>
<dbReference type="InterPro" id="IPR022742">
    <property type="entry name" value="Hydrolase_4"/>
</dbReference>
<dbReference type="PANTHER" id="PTHR12277">
    <property type="entry name" value="ALPHA/BETA HYDROLASE DOMAIN-CONTAINING PROTEIN"/>
    <property type="match status" value="1"/>
</dbReference>
<dbReference type="PANTHER" id="PTHR12277:SF52">
    <property type="entry name" value="ALPHA_BETA HYDROLASE DOMAIN-CONTAINING PROTEIN 17A"/>
    <property type="match status" value="1"/>
</dbReference>
<dbReference type="Pfam" id="PF12146">
    <property type="entry name" value="Hydrolase_4"/>
    <property type="match status" value="1"/>
</dbReference>
<dbReference type="SUPFAM" id="SSF53474">
    <property type="entry name" value="alpha/beta-Hydrolases"/>
    <property type="match status" value="1"/>
</dbReference>
<sequence length="310" mass="33994">MNGLSVSELCCLFCCPPCPGRIAAKLAFLPPEPTYSLVPEPEPGPGGAGAAPSGPLRTSAATPGRWKIHLTERADFQYGQRELDTIEVFVTKSARANRIACMYVRCVPGARYTVLFSHGNAVDLGQMCSFYVGLGTRIGCNIFSYDYSGYGISSGRPSEKNLYADIDAAWQALRTRYGISPDSIILYGQSIGTVPTVDLASRYECAAVVLHSPLTSGMRVAFPDTKKTYCFDAFPNIEKVSKITSPVLIIHGTEDEVIDFSHGLALYERCPKAVEPLWVEGAGHNDIELYSQYLERLRRFISQELPSQRT</sequence>
<name>AB17A_RAT</name>
<comment type="function">
    <text evidence="3 5 7">Hydrolyzes fatty acids from S-acylated cysteine residues in proteins (PubMed:27307232). Has depalmitoylating activity towards NRAS (By similarity). Has depalmitoylating activity towards DLG4/PSD95 (PubMed:27307232). May have depalmitoylating activity towards MAP6 (PubMed:28521134).</text>
</comment>
<comment type="catalytic activity">
    <reaction evidence="5">
        <text>S-hexadecanoyl-L-cysteinyl-[protein] + H2O = L-cysteinyl-[protein] + hexadecanoate + H(+)</text>
        <dbReference type="Rhea" id="RHEA:19233"/>
        <dbReference type="Rhea" id="RHEA-COMP:10131"/>
        <dbReference type="Rhea" id="RHEA-COMP:11032"/>
        <dbReference type="ChEBI" id="CHEBI:7896"/>
        <dbReference type="ChEBI" id="CHEBI:15377"/>
        <dbReference type="ChEBI" id="CHEBI:15378"/>
        <dbReference type="ChEBI" id="CHEBI:29950"/>
        <dbReference type="ChEBI" id="CHEBI:74151"/>
        <dbReference type="EC" id="3.1.2.22"/>
    </reaction>
</comment>
<comment type="subcellular location">
    <subcellularLocation>
        <location evidence="5">Cell membrane</location>
        <topology evidence="3">Lipid-anchor</topology>
        <orientation evidence="3">Cytoplasmic side</orientation>
    </subcellularLocation>
    <subcellularLocation>
        <location evidence="5">Recycling endosome membrane</location>
        <topology evidence="3">Lipid-anchor</topology>
        <orientation evidence="3">Cytoplasmic side</orientation>
    </subcellularLocation>
    <subcellularLocation>
        <location evidence="5">Cell projection</location>
        <location evidence="5">Dendritic spine</location>
    </subcellularLocation>
    <subcellularLocation>
        <location evidence="5">Postsynaptic density membrane</location>
    </subcellularLocation>
</comment>
<comment type="tissue specificity">
    <text evidence="5">Expressed in brain (at protein level). Expressed in hippocampal neurons.</text>
</comment>
<comment type="PTM">
    <text evidence="2">Palmitoylated on cysteine residues located in a cysteine cluster at the N-terminus which promotes membrane localization. Palmitoylation is required for post-synaptic localization and for depalmitoylating activity towards DLG4/PSD95.</text>
</comment>
<comment type="similarity">
    <text evidence="6">Belongs to the AB hydrolase superfamily. ABHD17 family.</text>
</comment>
<accession>Q5XIJ5</accession>
<protein>
    <recommendedName>
        <fullName evidence="6">Alpha/beta hydrolase domain-containing protein 17A</fullName>
        <shortName evidence="8">Abhydrolase domain-containing protein 17A</shortName>
        <ecNumber evidence="5">3.1.2.22</ecNumber>
    </recommendedName>
</protein>
<feature type="chain" id="PRO_0000297511" description="Alpha/beta hydrolase domain-containing protein 17A">
    <location>
        <begin position="1"/>
        <end position="310"/>
    </location>
</feature>
<feature type="region of interest" description="Disordered" evidence="4">
    <location>
        <begin position="38"/>
        <end position="61"/>
    </location>
</feature>
<feature type="active site" description="Charge relay system" evidence="3">
    <location>
        <position position="190"/>
    </location>
</feature>
<feature type="active site" description="Charge relay system" evidence="1">
    <location>
        <position position="255"/>
    </location>
</feature>
<feature type="active site" description="Charge relay system" evidence="1">
    <location>
        <position position="284"/>
    </location>
</feature>
<feature type="modified residue" description="Phosphoserine" evidence="3">
    <location>
        <position position="307"/>
    </location>
</feature>
<gene>
    <name evidence="8" type="primary">Abhd17a</name>
</gene>
<reference key="1">
    <citation type="journal article" date="2004" name="Genome Res.">
        <title>The status, quality, and expansion of the NIH full-length cDNA project: the Mammalian Gene Collection (MGC).</title>
        <authorList>
            <consortium name="The MGC Project Team"/>
        </authorList>
    </citation>
    <scope>NUCLEOTIDE SEQUENCE [LARGE SCALE MRNA]</scope>
    <source>
        <tissue>Heart</tissue>
    </source>
</reference>
<reference key="2">
    <citation type="journal article" date="2016" name="J. Neurosci.">
        <title>Identification of PSD-95 Depalmitoylating Enzymes.</title>
        <authorList>
            <person name="Yokoi N."/>
            <person name="Fukata Y."/>
            <person name="Sekiya A."/>
            <person name="Murakami T."/>
            <person name="Kobayashi K."/>
            <person name="Fukata M."/>
        </authorList>
    </citation>
    <scope>FUNCTION</scope>
    <scope>CATALYTIC ACTIVITY</scope>
    <scope>SUBCELLULAR LOCATION</scope>
    <scope>TISSUE SPECIFICITY</scope>
</reference>
<reference key="3">
    <citation type="journal article" date="2017" name="Neuron">
        <title>Dynamic palmitoylation targets MAP6 to the axon to promote microtubule stabilization during neuronal polarization.</title>
        <authorList>
            <person name="Tortosa E."/>
            <person name="Adolfs Y."/>
            <person name="Fukata M."/>
            <person name="Pasterkamp R.J."/>
            <person name="Kapitein L.C."/>
            <person name="Hoogenraad C.C."/>
        </authorList>
    </citation>
    <scope>FUNCTION</scope>
</reference>
<keyword id="KW-1003">Cell membrane</keyword>
<keyword id="KW-0966">Cell projection</keyword>
<keyword id="KW-0967">Endosome</keyword>
<keyword id="KW-0378">Hydrolase</keyword>
<keyword id="KW-0449">Lipoprotein</keyword>
<keyword id="KW-0472">Membrane</keyword>
<keyword id="KW-0564">Palmitate</keyword>
<keyword id="KW-0597">Phosphoprotein</keyword>
<keyword id="KW-0628">Postsynaptic cell membrane</keyword>
<keyword id="KW-1185">Reference proteome</keyword>
<keyword id="KW-0770">Synapse</keyword>
<organism>
    <name type="scientific">Rattus norvegicus</name>
    <name type="common">Rat</name>
    <dbReference type="NCBI Taxonomy" id="10116"/>
    <lineage>
        <taxon>Eukaryota</taxon>
        <taxon>Metazoa</taxon>
        <taxon>Chordata</taxon>
        <taxon>Craniata</taxon>
        <taxon>Vertebrata</taxon>
        <taxon>Euteleostomi</taxon>
        <taxon>Mammalia</taxon>
        <taxon>Eutheria</taxon>
        <taxon>Euarchontoglires</taxon>
        <taxon>Glires</taxon>
        <taxon>Rodentia</taxon>
        <taxon>Myomorpha</taxon>
        <taxon>Muroidea</taxon>
        <taxon>Muridae</taxon>
        <taxon>Murinae</taxon>
        <taxon>Rattus</taxon>
    </lineage>
</organism>
<proteinExistence type="evidence at protein level"/>
<evidence type="ECO:0000250" key="1">
    <source>
        <dbReference type="UniProtKB" id="O75608"/>
    </source>
</evidence>
<evidence type="ECO:0000250" key="2">
    <source>
        <dbReference type="UniProtKB" id="Q7M759"/>
    </source>
</evidence>
<evidence type="ECO:0000250" key="3">
    <source>
        <dbReference type="UniProtKB" id="Q96GS6"/>
    </source>
</evidence>
<evidence type="ECO:0000256" key="4">
    <source>
        <dbReference type="SAM" id="MobiDB-lite"/>
    </source>
</evidence>
<evidence type="ECO:0000269" key="5">
    <source>
    </source>
</evidence>
<evidence type="ECO:0000305" key="6"/>
<evidence type="ECO:0000305" key="7">
    <source>
    </source>
</evidence>
<evidence type="ECO:0000312" key="8">
    <source>
        <dbReference type="RGD" id="1359682"/>
    </source>
</evidence>